<feature type="chain" id="PRO_0000155526" description="Ribosomal RNA large subunit methyltransferase E">
    <location>
        <begin position="1"/>
        <end position="210"/>
    </location>
</feature>
<feature type="active site" description="Proton acceptor" evidence="1">
    <location>
        <position position="168"/>
    </location>
</feature>
<feature type="binding site" evidence="1">
    <location>
        <position position="67"/>
    </location>
    <ligand>
        <name>S-adenosyl-L-methionine</name>
        <dbReference type="ChEBI" id="CHEBI:59789"/>
    </ligand>
</feature>
<feature type="binding site" evidence="1">
    <location>
        <position position="69"/>
    </location>
    <ligand>
        <name>S-adenosyl-L-methionine</name>
        <dbReference type="ChEBI" id="CHEBI:59789"/>
    </ligand>
</feature>
<feature type="binding site" evidence="1">
    <location>
        <position position="87"/>
    </location>
    <ligand>
        <name>S-adenosyl-L-methionine</name>
        <dbReference type="ChEBI" id="CHEBI:59789"/>
    </ligand>
</feature>
<feature type="binding site" evidence="1">
    <location>
        <position position="103"/>
    </location>
    <ligand>
        <name>S-adenosyl-L-methionine</name>
        <dbReference type="ChEBI" id="CHEBI:59789"/>
    </ligand>
</feature>
<feature type="binding site" evidence="1">
    <location>
        <position position="128"/>
    </location>
    <ligand>
        <name>S-adenosyl-L-methionine</name>
        <dbReference type="ChEBI" id="CHEBI:59789"/>
    </ligand>
</feature>
<evidence type="ECO:0000255" key="1">
    <source>
        <dbReference type="HAMAP-Rule" id="MF_01547"/>
    </source>
</evidence>
<reference key="1">
    <citation type="journal article" date="2010" name="Appl. Environ. Microbiol.">
        <title>The genome sequence of Psychrobacter arcticus 273-4, a psychroactive Siberian permafrost bacterium, reveals mechanisms for adaptation to low-temperature growth.</title>
        <authorList>
            <person name="Ayala-del-Rio H.L."/>
            <person name="Chain P.S."/>
            <person name="Grzymski J.J."/>
            <person name="Ponder M.A."/>
            <person name="Ivanova N."/>
            <person name="Bergholz P.W."/>
            <person name="Di Bartolo G."/>
            <person name="Hauser L."/>
            <person name="Land M."/>
            <person name="Bakermans C."/>
            <person name="Rodrigues D."/>
            <person name="Klappenbach J."/>
            <person name="Zarka D."/>
            <person name="Larimer F."/>
            <person name="Richardson P."/>
            <person name="Murray A."/>
            <person name="Thomashow M."/>
            <person name="Tiedje J.M."/>
        </authorList>
    </citation>
    <scope>NUCLEOTIDE SEQUENCE [LARGE SCALE GENOMIC DNA]</scope>
    <source>
        <strain>DSM 17307 / VKM B-2377 / 273-4</strain>
    </source>
</reference>
<accession>Q4FQX1</accession>
<gene>
    <name evidence="1" type="primary">rlmE</name>
    <name evidence="1" type="synonym">ftsJ</name>
    <name evidence="1" type="synonym">rrmJ</name>
    <name type="ordered locus">Psyc_1739</name>
</gene>
<keyword id="KW-0963">Cytoplasm</keyword>
<keyword id="KW-0489">Methyltransferase</keyword>
<keyword id="KW-1185">Reference proteome</keyword>
<keyword id="KW-0698">rRNA processing</keyword>
<keyword id="KW-0949">S-adenosyl-L-methionine</keyword>
<keyword id="KW-0808">Transferase</keyword>
<dbReference type="EC" id="2.1.1.166" evidence="1"/>
<dbReference type="EMBL" id="CP000082">
    <property type="protein sequence ID" value="AAZ19587.1"/>
    <property type="molecule type" value="Genomic_DNA"/>
</dbReference>
<dbReference type="RefSeq" id="WP_011281000.1">
    <property type="nucleotide sequence ID" value="NC_007204.1"/>
</dbReference>
<dbReference type="SMR" id="Q4FQX1"/>
<dbReference type="STRING" id="259536.Psyc_1739"/>
<dbReference type="KEGG" id="par:Psyc_1739"/>
<dbReference type="eggNOG" id="COG0293">
    <property type="taxonomic scope" value="Bacteria"/>
</dbReference>
<dbReference type="HOGENOM" id="CLU_009422_4_0_6"/>
<dbReference type="OrthoDB" id="9790080at2"/>
<dbReference type="Proteomes" id="UP000000546">
    <property type="component" value="Chromosome"/>
</dbReference>
<dbReference type="GO" id="GO:0005737">
    <property type="term" value="C:cytoplasm"/>
    <property type="evidence" value="ECO:0007669"/>
    <property type="project" value="UniProtKB-SubCell"/>
</dbReference>
<dbReference type="GO" id="GO:0008650">
    <property type="term" value="F:rRNA (uridine-2'-O-)-methyltransferase activity"/>
    <property type="evidence" value="ECO:0007669"/>
    <property type="project" value="UniProtKB-UniRule"/>
</dbReference>
<dbReference type="FunFam" id="3.40.50.150:FF:000005">
    <property type="entry name" value="Ribosomal RNA large subunit methyltransferase E"/>
    <property type="match status" value="1"/>
</dbReference>
<dbReference type="Gene3D" id="3.40.50.150">
    <property type="entry name" value="Vaccinia Virus protein VP39"/>
    <property type="match status" value="1"/>
</dbReference>
<dbReference type="HAMAP" id="MF_01547">
    <property type="entry name" value="RNA_methyltr_E"/>
    <property type="match status" value="1"/>
</dbReference>
<dbReference type="InterPro" id="IPR050082">
    <property type="entry name" value="RNA_methyltr_RlmE"/>
</dbReference>
<dbReference type="InterPro" id="IPR002877">
    <property type="entry name" value="RNA_MeTrfase_FtsJ_dom"/>
</dbReference>
<dbReference type="InterPro" id="IPR015507">
    <property type="entry name" value="rRNA-MeTfrase_E"/>
</dbReference>
<dbReference type="InterPro" id="IPR029063">
    <property type="entry name" value="SAM-dependent_MTases_sf"/>
</dbReference>
<dbReference type="PANTHER" id="PTHR10920">
    <property type="entry name" value="RIBOSOMAL RNA METHYLTRANSFERASE"/>
    <property type="match status" value="1"/>
</dbReference>
<dbReference type="PANTHER" id="PTHR10920:SF18">
    <property type="entry name" value="RRNA METHYLTRANSFERASE 2, MITOCHONDRIAL"/>
    <property type="match status" value="1"/>
</dbReference>
<dbReference type="Pfam" id="PF01728">
    <property type="entry name" value="FtsJ"/>
    <property type="match status" value="1"/>
</dbReference>
<dbReference type="PIRSF" id="PIRSF005461">
    <property type="entry name" value="23S_rRNA_mtase"/>
    <property type="match status" value="1"/>
</dbReference>
<dbReference type="SUPFAM" id="SSF53335">
    <property type="entry name" value="S-adenosyl-L-methionine-dependent methyltransferases"/>
    <property type="match status" value="1"/>
</dbReference>
<sequence length="210" mass="23319">MATRIENKKLSKSSSAWMKEHIDDHYVQKAQKDGYRARAAYKLLEINEKTNLIKKGMTVVDLGSAPGSWSQVAGQLVGEKGILIASDILPMDTLPDVTFIQGDFREPEVFDHIMAEVGDRQVDVVLSDMAPNTAGNSAIDQPRMMYLCELAVDFALATLPEGGALIMKVFQGEGTQELRKQMQADFSKIRSIKPGASRPRSKEMFWIAIK</sequence>
<protein>
    <recommendedName>
        <fullName evidence="1">Ribosomal RNA large subunit methyltransferase E</fullName>
        <ecNumber evidence="1">2.1.1.166</ecNumber>
    </recommendedName>
    <alternativeName>
        <fullName evidence="1">23S rRNA Um2552 methyltransferase</fullName>
    </alternativeName>
    <alternativeName>
        <fullName evidence="1">rRNA (uridine-2'-O-)-methyltransferase</fullName>
    </alternativeName>
</protein>
<name>RLME_PSYA2</name>
<organism>
    <name type="scientific">Psychrobacter arcticus (strain DSM 17307 / VKM B-2377 / 273-4)</name>
    <dbReference type="NCBI Taxonomy" id="259536"/>
    <lineage>
        <taxon>Bacteria</taxon>
        <taxon>Pseudomonadati</taxon>
        <taxon>Pseudomonadota</taxon>
        <taxon>Gammaproteobacteria</taxon>
        <taxon>Moraxellales</taxon>
        <taxon>Moraxellaceae</taxon>
        <taxon>Psychrobacter</taxon>
    </lineage>
</organism>
<proteinExistence type="inferred from homology"/>
<comment type="function">
    <text evidence="1">Specifically methylates the uridine in position 2552 of 23S rRNA at the 2'-O position of the ribose in the fully assembled 50S ribosomal subunit.</text>
</comment>
<comment type="catalytic activity">
    <reaction evidence="1">
        <text>uridine(2552) in 23S rRNA + S-adenosyl-L-methionine = 2'-O-methyluridine(2552) in 23S rRNA + S-adenosyl-L-homocysteine + H(+)</text>
        <dbReference type="Rhea" id="RHEA:42720"/>
        <dbReference type="Rhea" id="RHEA-COMP:10202"/>
        <dbReference type="Rhea" id="RHEA-COMP:10203"/>
        <dbReference type="ChEBI" id="CHEBI:15378"/>
        <dbReference type="ChEBI" id="CHEBI:57856"/>
        <dbReference type="ChEBI" id="CHEBI:59789"/>
        <dbReference type="ChEBI" id="CHEBI:65315"/>
        <dbReference type="ChEBI" id="CHEBI:74478"/>
        <dbReference type="EC" id="2.1.1.166"/>
    </reaction>
</comment>
<comment type="subcellular location">
    <subcellularLocation>
        <location evidence="1">Cytoplasm</location>
    </subcellularLocation>
</comment>
<comment type="similarity">
    <text evidence="1">Belongs to the class I-like SAM-binding methyltransferase superfamily. RNA methyltransferase RlmE family.</text>
</comment>